<gene>
    <name evidence="10" type="primary">TOGARAM1</name>
    <name type="synonym">FAM179B</name>
    <name type="synonym">KIAA0423</name>
</gene>
<keyword id="KW-0025">Alternative splicing</keyword>
<keyword id="KW-0966">Cell projection</keyword>
<keyword id="KW-1186">Ciliopathy</keyword>
<keyword id="KW-0970">Cilium biogenesis/degradation</keyword>
<keyword id="KW-0963">Cytoplasm</keyword>
<keyword id="KW-0206">Cytoskeleton</keyword>
<keyword id="KW-0225">Disease variant</keyword>
<keyword id="KW-0979">Joubert syndrome</keyword>
<keyword id="KW-1267">Proteomics identification</keyword>
<keyword id="KW-1185">Reference proteome</keyword>
<keyword id="KW-0677">Repeat</keyword>
<accession>Q9Y4F4</accession>
<accession>Q68D66</accession>
<accession>Q6PG27</accession>
<evidence type="ECO:0000250" key="1">
    <source>
        <dbReference type="UniProtKB" id="Q17423"/>
    </source>
</evidence>
<evidence type="ECO:0000250" key="2">
    <source>
        <dbReference type="UniProtKB" id="Q6A070"/>
    </source>
</evidence>
<evidence type="ECO:0000255" key="3"/>
<evidence type="ECO:0000256" key="4">
    <source>
        <dbReference type="SAM" id="MobiDB-lite"/>
    </source>
</evidence>
<evidence type="ECO:0000269" key="5">
    <source>
    </source>
</evidence>
<evidence type="ECO:0000269" key="6">
    <source>
    </source>
</evidence>
<evidence type="ECO:0000303" key="7">
    <source>
    </source>
</evidence>
<evidence type="ECO:0000303" key="8">
    <source>
    </source>
</evidence>
<evidence type="ECO:0000305" key="9"/>
<evidence type="ECO:0000312" key="10">
    <source>
        <dbReference type="HGNC" id="HGNC:19959"/>
    </source>
</evidence>
<name>TGRM1_HUMAN</name>
<protein>
    <recommendedName>
        <fullName evidence="10">TOG array regulator of axonemal microtubules protein 1</fullName>
    </recommendedName>
    <alternativeName>
        <fullName evidence="9">Crescerin-1</fullName>
    </alternativeName>
    <alternativeName>
        <fullName>Protein FAM179B</fullName>
    </alternativeName>
</protein>
<sequence>MAAAPSALLLLPPFPVLSTYRLQSRSRPSAPETDDSRVGGIMRGEKNYYFRGAAGDHGSCPTTTSPLASALLMPSEAVSSSWSESGGGLSGGDEEDTRLLQLLRTARDPSEAFQALQAALPRRGGRLGFPRRKEALYRALGRVLVEGGSDEKRLCLQLLSDVLRGQGEAGQLEEAFSLALLPQLVVSLREENPALRKDALQILHICLKRSPGEVLRTLIQQGLESTDARLRASTALLLPILLTTEDLLLGLDLTEVIISLARKLGDQETEEESETAFSALQQIGERLGQDRFQSYISRLPSALRRHYNRRLESQFGSQVPYYLELEASGFPEDPLPCAVTLSNSNLKFGIIPQELHSRLLDQEDYKNRTQAVEELKQVLGKFNPSSTPHSSLVGFISLLYNLLDDSNFKVVHGTLEVLHLLVIRLGEQVQQFLGPVIAASVKVLADNKLVIKQEYMKIFLKLMKEVGPQQVLCLLLEHLKHKHSRVREEVVNICICSLLTYPSEDFDLPKLSFDLAPALVDSKRRVRQAALEAFAVLASSMGSGKTSILFKAVDTVELQDNGDGVMNAVQARLARKTLPRLTEQGFVEYAVLMPSSAGGRSNHLAHGADTDWLLAGNRTQSAHCHCGDHVRDSMHIYGSYSPTICTRRVLSAGKGKNKLPWENEQPGIMGENQTSTSKDIEQFSTYDFIPSAKLKLSQGMPVNDDLCFSRKRVSRNLFQNSRDFNPDCLPLCAAGTTGTHQTNLSGKCAQLGFSQICGKTGSVGSDLQFLGTTSSHQEKVYASLNFGSKTQQTFGSQTECTSSNGQNPSPGAYILPSYPVSSPRTSPKHTSPLIISPKKSQDNSVNFSNSWPLKSFEGLSKPSPQKKLVSQKSSDPTGRNHGENSQEKPPVQLTPALVRSPSSRRGLNGTKPVPPIPRGISLLPDKADLSTVGHKKKEPDDIWKCEKDSLPIDLSELNFKDKDLDQEEMHSSLRSLRNSAAKKRAKLSGSTSDLESPDSAMKLDLTMDSPSLSSSPNINSYSESGVYSQESLTSSLSTTPQGKRIMSDIFPTFGSKPCPTRLSSAKKKISHIAEQSPSAGSSSNPQQISSFDFTTTKALSEDSVVVVGKGVFGSLSSAPATCSQSVISSVENGDTFSIKQSIEPPSGIYGRSVQQNISSYLDVENEKDAKVSISKSTYNKMRQKRKEEKELFHNKDCEKKEKNSWERMRHTGTEKMASESETPTGAISQYKERMPSVTHSPEIMDLSELRPFSKPEIALTEALRLLADEDWEKKIEGLNFIRCLAAFHSEILNTKLHETNFAVVQEVKNLRSGVSRAAVVCLSDLFTYLKKSMDQELDTTVKVLLHKAGESNTFIREDVDKALRAMVNNVTPARAVVSLINGGQRYYGRKMLFFMMCHPNFEKMLEKYVPSKDLPYIKDSVRNLQQKGLGEIPLDTPSAKGRRSHTGSVGNTRSSSVSRDAFNSAERAVTEVREVTRKSVPRNSLESAEYLKLITGLLNAKDFRDRINGIKQLLSDTENNQDLVVGNIVKIFDAFKSRLHDSNSKVNLVALETMHKMIPLLRDHLSPIINMLIPAIVDNNLNSKNPGIYAAATNVVQALSQHVDNYLLLQPFCTKAQFLNGKAKQDMTEKLADIVTELYQRKPHATEQKVLVVLWHLLGNMTNSGSLPGAGGNIRTATAKLSKALFAQMGQNLLNQAASQPPHIKKSLEELLDMTILNEL</sequence>
<feature type="chain" id="PRO_0000251952" description="TOG array regulator of axonemal microtubules protein 1">
    <location>
        <begin position="1"/>
        <end position="1720"/>
    </location>
</feature>
<feature type="repeat" description="HEAT 1" evidence="3">
    <location>
        <begin position="175"/>
        <end position="212"/>
    </location>
</feature>
<feature type="repeat" description="HEAT 2" evidence="3">
    <location>
        <begin position="214"/>
        <end position="247"/>
    </location>
</feature>
<feature type="repeat" description="HEAT 3" evidence="3">
    <location>
        <begin position="251"/>
        <end position="289"/>
    </location>
</feature>
<feature type="repeat" description="HEAT 4" evidence="3">
    <location>
        <begin position="345"/>
        <end position="384"/>
    </location>
</feature>
<feature type="repeat" description="HEAT 5" evidence="3">
    <location>
        <begin position="390"/>
        <end position="427"/>
    </location>
</feature>
<feature type="repeat" description="HEAT 6" evidence="3">
    <location>
        <begin position="431"/>
        <end position="466"/>
    </location>
</feature>
<feature type="repeat" description="HEAT 7" evidence="3">
    <location>
        <begin position="467"/>
        <end position="504"/>
    </location>
</feature>
<feature type="repeat" description="HEAT 8" evidence="3">
    <location>
        <begin position="506"/>
        <end position="543"/>
    </location>
</feature>
<feature type="repeat" description="HEAT 9" evidence="3">
    <location>
        <begin position="1294"/>
        <end position="1331"/>
    </location>
</feature>
<feature type="repeat" description="HEAT 10" evidence="3">
    <location>
        <begin position="1335"/>
        <end position="1372"/>
    </location>
</feature>
<feature type="repeat" description="HEAT 11" evidence="3">
    <location>
        <begin position="1485"/>
        <end position="1522"/>
    </location>
</feature>
<feature type="repeat" description="HEAT 12" evidence="3">
    <location>
        <begin position="1526"/>
        <end position="1563"/>
    </location>
</feature>
<feature type="repeat" description="HEAT 13" evidence="3">
    <location>
        <begin position="1567"/>
        <end position="1605"/>
    </location>
</feature>
<feature type="region of interest" description="TOG 1" evidence="2">
    <location>
        <begin position="94"/>
        <end position="312"/>
    </location>
</feature>
<feature type="region of interest" description="TOG 2" evidence="2">
    <location>
        <begin position="352"/>
        <end position="596"/>
    </location>
</feature>
<feature type="region of interest" description="Disordered" evidence="4">
    <location>
        <begin position="794"/>
        <end position="924"/>
    </location>
</feature>
<feature type="region of interest" description="Disordered" evidence="4">
    <location>
        <begin position="970"/>
        <end position="998"/>
    </location>
</feature>
<feature type="region of interest" description="Disordered" evidence="4">
    <location>
        <begin position="1067"/>
        <end position="1087"/>
    </location>
</feature>
<feature type="region of interest" description="TOG 3" evidence="2">
    <location>
        <begin position="1256"/>
        <end position="1425"/>
    </location>
</feature>
<feature type="region of interest" description="Disordered" evidence="4">
    <location>
        <begin position="1430"/>
        <end position="1462"/>
    </location>
</feature>
<feature type="region of interest" description="TOG 4" evidence="2">
    <location>
        <begin position="1484"/>
        <end position="1720"/>
    </location>
</feature>
<feature type="compositionally biased region" description="Polar residues" evidence="4">
    <location>
        <begin position="794"/>
        <end position="809"/>
    </location>
</feature>
<feature type="compositionally biased region" description="Polar residues" evidence="4">
    <location>
        <begin position="819"/>
        <end position="829"/>
    </location>
</feature>
<feature type="compositionally biased region" description="Polar residues" evidence="4">
    <location>
        <begin position="842"/>
        <end position="852"/>
    </location>
</feature>
<feature type="compositionally biased region" description="Polar residues" evidence="4">
    <location>
        <begin position="868"/>
        <end position="877"/>
    </location>
</feature>
<feature type="compositionally biased region" description="Polar residues" evidence="4">
    <location>
        <begin position="1073"/>
        <end position="1087"/>
    </location>
</feature>
<feature type="compositionally biased region" description="Polar residues" evidence="4">
    <location>
        <begin position="1446"/>
        <end position="1458"/>
    </location>
</feature>
<feature type="splice variant" id="VSP_020821" description="In isoform 3." evidence="8">
    <original>MHSSLRSLRNSAAKKRAKLSGSTSDLE</original>
    <variation>VRHISNIWVKTLSNKTFFCKEKNFSYC</variation>
    <location>
        <begin position="969"/>
        <end position="995"/>
    </location>
</feature>
<feature type="splice variant" id="VSP_020822" description="In isoform 2." evidence="7">
    <original>MHSSLR</original>
    <variation>VRTKYF</variation>
    <location>
        <begin position="969"/>
        <end position="974"/>
    </location>
</feature>
<feature type="splice variant" id="VSP_020823" description="In isoform 2." evidence="7">
    <location>
        <begin position="975"/>
        <end position="1720"/>
    </location>
</feature>
<feature type="splice variant" id="VSP_020824" description="In isoform 3." evidence="8">
    <location>
        <begin position="996"/>
        <end position="1720"/>
    </location>
</feature>
<feature type="sequence variant" id="VAR_085345" description="In JBTS37." evidence="5">
    <location>
        <begin position="362"/>
        <end position="1720"/>
    </location>
</feature>
<feature type="sequence variant" id="VAR_085346" description="In JBTS37; loss of interaction with ARMC9; dbSNP:rs368448387." evidence="5 6">
    <original>R</original>
    <variation>W</variation>
    <location>
        <position position="368"/>
    </location>
</feature>
<feature type="sequence variant" id="VAR_085347" description="In JBTS37; uncertain significance; dbSNP:rs370676288." evidence="5">
    <original>A</original>
    <variation>D</variation>
    <location>
        <position position="371"/>
    </location>
</feature>
<feature type="sequence variant" id="VAR_085348" description="In JBTS37; loss of interaction with ARMC9; dbSNP:rs150433582." evidence="5">
    <original>L</original>
    <variation>P</variation>
    <location>
        <position position="375"/>
    </location>
</feature>
<feature type="sequence variant" id="VAR_027739" description="In dbSNP:rs3825629.">
    <original>E</original>
    <variation>Q</variation>
    <location>
        <position position="416"/>
    </location>
</feature>
<feature type="sequence variant" id="VAR_027740" description="In dbSNP:rs3742591.">
    <original>L</original>
    <variation>V</variation>
    <location>
        <position position="511"/>
    </location>
</feature>
<feature type="sequence variant" id="VAR_085349" description="In JBTS37." evidence="5">
    <location>
        <begin position="1083"/>
        <end position="1720"/>
    </location>
</feature>
<feature type="sequence variant" id="VAR_085350" description="In JBTS37." evidence="6">
    <location>
        <begin position="1207"/>
        <end position="1720"/>
    </location>
</feature>
<feature type="sequence variant" id="VAR_085351" description="In JBTS37; affects ciliogenesis resulting in shorter cilia; does not affect the interaction with ARMC9; dbSNP:rs759684383." evidence="5">
    <original>R</original>
    <variation>C</variation>
    <location>
        <position position="1311"/>
    </location>
</feature>
<feature type="sequence variant" id="VAR_085352" description="In JBTS37; uncertain significance." evidence="5">
    <location>
        <begin position="1675"/>
        <end position="1720"/>
    </location>
</feature>
<feature type="sequence conflict" description="In Ref. 4; CAH18354." evidence="9" ref="4">
    <original>E</original>
    <variation>G</variation>
    <location>
        <position position="191"/>
    </location>
</feature>
<feature type="sequence conflict" description="In Ref. 1; BAA24853." evidence="9" ref="1">
    <original>E</original>
    <variation>K</variation>
    <location>
        <position position="477"/>
    </location>
</feature>
<feature type="sequence conflict" description="In Ref. 1; BAA24853." evidence="9" ref="1">
    <original>S</original>
    <variation>L</variation>
    <location>
        <position position="992"/>
    </location>
</feature>
<organism>
    <name type="scientific">Homo sapiens</name>
    <name type="common">Human</name>
    <dbReference type="NCBI Taxonomy" id="9606"/>
    <lineage>
        <taxon>Eukaryota</taxon>
        <taxon>Metazoa</taxon>
        <taxon>Chordata</taxon>
        <taxon>Craniata</taxon>
        <taxon>Vertebrata</taxon>
        <taxon>Euteleostomi</taxon>
        <taxon>Mammalia</taxon>
        <taxon>Eutheria</taxon>
        <taxon>Euarchontoglires</taxon>
        <taxon>Primates</taxon>
        <taxon>Haplorrhini</taxon>
        <taxon>Catarrhini</taxon>
        <taxon>Hominidae</taxon>
        <taxon>Homo</taxon>
    </lineage>
</organism>
<reference key="1">
    <citation type="journal article" date="1997" name="DNA Res.">
        <title>Prediction of the coding sequences of unidentified human genes. VIII. 78 new cDNA clones from brain which code for large proteins in vitro.</title>
        <authorList>
            <person name="Ishikawa K."/>
            <person name="Nagase T."/>
            <person name="Nakajima D."/>
            <person name="Seki N."/>
            <person name="Ohira M."/>
            <person name="Miyajima N."/>
            <person name="Tanaka A."/>
            <person name="Kotani H."/>
            <person name="Nomura N."/>
            <person name="Ohara O."/>
        </authorList>
    </citation>
    <scope>NUCLEOTIDE SEQUENCE [LARGE SCALE MRNA] (ISOFORM 1)</scope>
    <source>
        <tissue>Brain</tissue>
    </source>
</reference>
<reference key="2">
    <citation type="journal article" date="2002" name="DNA Res.">
        <title>Construction of expression-ready cDNA clones for KIAA genes: manual curation of 330 KIAA cDNA clones.</title>
        <authorList>
            <person name="Nakajima D."/>
            <person name="Okazaki N."/>
            <person name="Yamakawa H."/>
            <person name="Kikuno R."/>
            <person name="Ohara O."/>
            <person name="Nagase T."/>
        </authorList>
    </citation>
    <scope>SEQUENCE REVISION</scope>
</reference>
<reference key="3">
    <citation type="journal article" date="2007" name="BMC Genomics">
        <title>The full-ORF clone resource of the German cDNA consortium.</title>
        <authorList>
            <person name="Bechtel S."/>
            <person name="Rosenfelder H."/>
            <person name="Duda A."/>
            <person name="Schmidt C.P."/>
            <person name="Ernst U."/>
            <person name="Wellenreuther R."/>
            <person name="Mehrle A."/>
            <person name="Schuster C."/>
            <person name="Bahr A."/>
            <person name="Bloecker H."/>
            <person name="Heubner D."/>
            <person name="Hoerlein A."/>
            <person name="Michel G."/>
            <person name="Wedler H."/>
            <person name="Koehrer K."/>
            <person name="Ottenwaelder B."/>
            <person name="Poustka A."/>
            <person name="Wiemann S."/>
            <person name="Schupp I."/>
        </authorList>
    </citation>
    <scope>NUCLEOTIDE SEQUENCE [LARGE SCALE MRNA] (ISOFORM 3)</scope>
    <source>
        <tissue>Uterus</tissue>
    </source>
</reference>
<reference key="4">
    <citation type="journal article" date="2003" name="Nature">
        <title>The DNA sequence and analysis of human chromosome 14.</title>
        <authorList>
            <person name="Heilig R."/>
            <person name="Eckenberg R."/>
            <person name="Petit J.-L."/>
            <person name="Fonknechten N."/>
            <person name="Da Silva C."/>
            <person name="Cattolico L."/>
            <person name="Levy M."/>
            <person name="Barbe V."/>
            <person name="De Berardinis V."/>
            <person name="Ureta-Vidal A."/>
            <person name="Pelletier E."/>
            <person name="Vico V."/>
            <person name="Anthouard V."/>
            <person name="Rowen L."/>
            <person name="Madan A."/>
            <person name="Qin S."/>
            <person name="Sun H."/>
            <person name="Du H."/>
            <person name="Pepin K."/>
            <person name="Artiguenave F."/>
            <person name="Robert C."/>
            <person name="Cruaud C."/>
            <person name="Bruels T."/>
            <person name="Jaillon O."/>
            <person name="Friedlander L."/>
            <person name="Samson G."/>
            <person name="Brottier P."/>
            <person name="Cure S."/>
            <person name="Segurens B."/>
            <person name="Aniere F."/>
            <person name="Samain S."/>
            <person name="Crespeau H."/>
            <person name="Abbasi N."/>
            <person name="Aiach N."/>
            <person name="Boscus D."/>
            <person name="Dickhoff R."/>
            <person name="Dors M."/>
            <person name="Dubois I."/>
            <person name="Friedman C."/>
            <person name="Gouyvenoux M."/>
            <person name="James R."/>
            <person name="Madan A."/>
            <person name="Mairey-Estrada B."/>
            <person name="Mangenot S."/>
            <person name="Martins N."/>
            <person name="Menard M."/>
            <person name="Oztas S."/>
            <person name="Ratcliffe A."/>
            <person name="Shaffer T."/>
            <person name="Trask B."/>
            <person name="Vacherie B."/>
            <person name="Bellemere C."/>
            <person name="Belser C."/>
            <person name="Besnard-Gonnet M."/>
            <person name="Bartol-Mavel D."/>
            <person name="Boutard M."/>
            <person name="Briez-Silla S."/>
            <person name="Combette S."/>
            <person name="Dufosse-Laurent V."/>
            <person name="Ferron C."/>
            <person name="Lechaplais C."/>
            <person name="Louesse C."/>
            <person name="Muselet D."/>
            <person name="Magdelenat G."/>
            <person name="Pateau E."/>
            <person name="Petit E."/>
            <person name="Sirvain-Trukniewicz P."/>
            <person name="Trybou A."/>
            <person name="Vega-Czarny N."/>
            <person name="Bataille E."/>
            <person name="Bluet E."/>
            <person name="Bordelais I."/>
            <person name="Dubois M."/>
            <person name="Dumont C."/>
            <person name="Guerin T."/>
            <person name="Haffray S."/>
            <person name="Hammadi R."/>
            <person name="Muanga J."/>
            <person name="Pellouin V."/>
            <person name="Robert D."/>
            <person name="Wunderle E."/>
            <person name="Gauguet G."/>
            <person name="Roy A."/>
            <person name="Sainte-Marthe L."/>
            <person name="Verdier J."/>
            <person name="Verdier-Discala C."/>
            <person name="Hillier L.W."/>
            <person name="Fulton L."/>
            <person name="McPherson J."/>
            <person name="Matsuda F."/>
            <person name="Wilson R."/>
            <person name="Scarpelli C."/>
            <person name="Gyapay G."/>
            <person name="Wincker P."/>
            <person name="Saurin W."/>
            <person name="Quetier F."/>
            <person name="Waterston R."/>
            <person name="Hood L."/>
            <person name="Weissenbach J."/>
        </authorList>
    </citation>
    <scope>NUCLEOTIDE SEQUENCE [LARGE SCALE GENOMIC DNA]</scope>
</reference>
<reference key="5">
    <citation type="journal article" date="2004" name="Genome Res.">
        <title>The status, quality, and expansion of the NIH full-length cDNA project: the Mammalian Gene Collection (MGC).</title>
        <authorList>
            <consortium name="The MGC Project Team"/>
        </authorList>
    </citation>
    <scope>NUCLEOTIDE SEQUENCE [LARGE SCALE MRNA] (ISOFORM 2)</scope>
    <source>
        <tissue>Hippocampus</tissue>
    </source>
</reference>
<reference key="6">
    <citation type="journal article" date="2005" name="J. Proteome Res.">
        <title>Detection of hypothetical proteins in human fetal perireticular nucleus.</title>
        <authorList>
            <person name="Hepner F."/>
            <person name="Myung J.-K."/>
            <person name="Ulfig N."/>
            <person name="Pollak A."/>
            <person name="Lubec G."/>
        </authorList>
    </citation>
    <scope>IDENTIFICATION BY MASS SPECTROMETRY</scope>
</reference>
<reference key="7">
    <citation type="journal article" date="2013" name="J. Proteome Res.">
        <title>Toward a comprehensive characterization of a human cancer cell phosphoproteome.</title>
        <authorList>
            <person name="Zhou H."/>
            <person name="Di Palma S."/>
            <person name="Preisinger C."/>
            <person name="Peng M."/>
            <person name="Polat A.N."/>
            <person name="Heck A.J."/>
            <person name="Mohammed S."/>
        </authorList>
    </citation>
    <scope>IDENTIFICATION BY MASS SPECTROMETRY [LARGE SCALE ANALYSIS]</scope>
    <source>
        <tissue>Erythroleukemia</tissue>
    </source>
</reference>
<reference key="8">
    <citation type="journal article" date="2020" name="J. Clin. Invest.">
        <title>Dysfunction of the ciliary ARMC9/TOGARAM1 protein module causes Joubert syndrome.</title>
        <authorList>
            <consortium name="University of Washington Center for Mendelian Genomics"/>
            <consortium name="Genomics England Research Consortium"/>
            <person name="Latour B.L."/>
            <person name="Van De Weghe J.C."/>
            <person name="Rusterholz T.D."/>
            <person name="Letteboer S.J."/>
            <person name="Gomez A."/>
            <person name="Shaheen R."/>
            <person name="Gesemann M."/>
            <person name="Karamzade A."/>
            <person name="Asadollahi M."/>
            <person name="Barroso-Gil M."/>
            <person name="Chitre M."/>
            <person name="Grout M.E."/>
            <person name="van Reeuwijk J."/>
            <person name="van Beersum S.E."/>
            <person name="Miller C.V."/>
            <person name="Dempsey J.C."/>
            <person name="Morsy H."/>
            <person name="Bamshad M.J."/>
            <person name="Nickerson D.A."/>
            <person name="Neuhauss S.C."/>
            <person name="Boldt K."/>
            <person name="Ueffing M."/>
            <person name="Keramatipour M."/>
            <person name="Sayer J.A."/>
            <person name="Alkuraya F.S."/>
            <person name="Bachmann-Gagescu R."/>
            <person name="Roepman R."/>
            <person name="Doherty D."/>
        </authorList>
    </citation>
    <scope>FUNCTION</scope>
    <scope>SUBCELLULAR LOCATION</scope>
    <scope>INTERACTION WITH ARMC9; CCDC66; CEP104 AND CSPP1</scope>
    <scope>INVOLVEMENT IN JBTS37</scope>
    <scope>VARIANTS JBTS37 362-GLN--LEU-1720 DEL; TRP-368; ASP-371; PRO-375; 1083-SER--LEU-1720 DEL; CYS-1311 AND 1675-ARG--LEU-1720 DEL</scope>
    <scope>CHARACTERIZATION OF VARIANTS JBTS37 TRP-368; PRO-375 AND CYS-1311</scope>
</reference>
<reference key="9">
    <citation type="journal article" date="2021" name="J. Med. Genet.">
        <title>Biallelic mutations in the TOGARAM1 gene cause a novel primary ciliopathy.</title>
        <authorList>
            <person name="Morbidoni V."/>
            <person name="Agolini E."/>
            <person name="Slep K.C."/>
            <person name="Pannone L."/>
            <person name="Zuccarello D."/>
            <person name="Cassina M."/>
            <person name="Grosso E."/>
            <person name="Gai G."/>
            <person name="Salviati L."/>
            <person name="Dallapiccola B."/>
            <person name="Novelli A."/>
            <person name="Martinelli S."/>
            <person name="Trevisson E."/>
        </authorList>
    </citation>
    <scope>INVOLVEMENT IN JBTS37</scope>
    <scope>VARIANTS JBTS37 TRP-368 AND 1207-ARG--LEU-1720 DEL</scope>
</reference>
<dbReference type="EMBL" id="AB007883">
    <property type="protein sequence ID" value="BAA24853.2"/>
    <property type="status" value="ALT_INIT"/>
    <property type="molecule type" value="mRNA"/>
</dbReference>
<dbReference type="EMBL" id="CR749557">
    <property type="protein sequence ID" value="CAH18354.1"/>
    <property type="status" value="ALT_FRAME"/>
    <property type="molecule type" value="mRNA"/>
</dbReference>
<dbReference type="EMBL" id="AL049870">
    <property type="status" value="NOT_ANNOTATED_CDS"/>
    <property type="molecule type" value="Genomic_DNA"/>
</dbReference>
<dbReference type="EMBL" id="AL121809">
    <property type="status" value="NOT_ANNOTATED_CDS"/>
    <property type="molecule type" value="Genomic_DNA"/>
</dbReference>
<dbReference type="EMBL" id="BC057255">
    <property type="protein sequence ID" value="AAH57255.1"/>
    <property type="molecule type" value="mRNA"/>
</dbReference>
<dbReference type="CCDS" id="CCDS9681.1">
    <molecule id="Q9Y4F4-1"/>
</dbReference>
<dbReference type="PIR" id="T00057">
    <property type="entry name" value="T00057"/>
</dbReference>
<dbReference type="RefSeq" id="NP_055906.2">
    <molecule id="Q9Y4F4-1"/>
    <property type="nucleotide sequence ID" value="NM_015091.4"/>
</dbReference>
<dbReference type="RefSeq" id="XP_016876589.1">
    <molecule id="Q9Y4F4-3"/>
    <property type="nucleotide sequence ID" value="XM_017021100.2"/>
</dbReference>
<dbReference type="RefSeq" id="XP_054231639.1">
    <molecule id="Q9Y4F4-3"/>
    <property type="nucleotide sequence ID" value="XM_054375664.1"/>
</dbReference>
<dbReference type="SMR" id="Q9Y4F4"/>
<dbReference type="BioGRID" id="116738">
    <property type="interactions" value="14"/>
</dbReference>
<dbReference type="FunCoup" id="Q9Y4F4">
    <property type="interactions" value="1250"/>
</dbReference>
<dbReference type="IntAct" id="Q9Y4F4">
    <property type="interactions" value="10"/>
</dbReference>
<dbReference type="STRING" id="9606.ENSP00000354917"/>
<dbReference type="GlyGen" id="Q9Y4F4">
    <property type="glycosylation" value="1 site"/>
</dbReference>
<dbReference type="iPTMnet" id="Q9Y4F4"/>
<dbReference type="PhosphoSitePlus" id="Q9Y4F4"/>
<dbReference type="BioMuta" id="TOGARAM1"/>
<dbReference type="DMDM" id="296439476"/>
<dbReference type="jPOST" id="Q9Y4F4"/>
<dbReference type="MassIVE" id="Q9Y4F4"/>
<dbReference type="PaxDb" id="9606-ENSP00000355045"/>
<dbReference type="PeptideAtlas" id="Q9Y4F4"/>
<dbReference type="ProteomicsDB" id="86194">
    <molecule id="Q9Y4F4-1"/>
</dbReference>
<dbReference type="ProteomicsDB" id="86195">
    <molecule id="Q9Y4F4-2"/>
</dbReference>
<dbReference type="ProteomicsDB" id="86196">
    <molecule id="Q9Y4F4-3"/>
</dbReference>
<dbReference type="Antibodypedia" id="23425">
    <property type="antibodies" value="14 antibodies from 7 providers"/>
</dbReference>
<dbReference type="DNASU" id="23116"/>
<dbReference type="Ensembl" id="ENST00000361577.7">
    <molecule id="Q9Y4F4-1"/>
    <property type="protein sequence ID" value="ENSP00000355045.3"/>
    <property type="gene ID" value="ENSG00000198718.13"/>
</dbReference>
<dbReference type="Ensembl" id="ENST00000557423.5">
    <molecule id="Q9Y4F4-3"/>
    <property type="protein sequence ID" value="ENSP00000451829.1"/>
    <property type="gene ID" value="ENSG00000198718.13"/>
</dbReference>
<dbReference type="GeneID" id="23116"/>
<dbReference type="KEGG" id="hsa:23116"/>
<dbReference type="UCSC" id="uc001wvv.4">
    <molecule id="Q9Y4F4-1"/>
    <property type="organism name" value="human"/>
</dbReference>
<dbReference type="AGR" id="HGNC:19959"/>
<dbReference type="CTD" id="23116"/>
<dbReference type="DisGeNET" id="23116"/>
<dbReference type="GeneCards" id="TOGARAM1"/>
<dbReference type="HGNC" id="HGNC:19959">
    <property type="gene designation" value="TOGARAM1"/>
</dbReference>
<dbReference type="HPA" id="ENSG00000198718">
    <property type="expression patterns" value="Low tissue specificity"/>
</dbReference>
<dbReference type="MalaCards" id="TOGARAM1"/>
<dbReference type="MIM" id="617618">
    <property type="type" value="gene"/>
</dbReference>
<dbReference type="MIM" id="619185">
    <property type="type" value="phenotype"/>
</dbReference>
<dbReference type="neXtProt" id="NX_Q9Y4F4"/>
<dbReference type="OpenTargets" id="ENSG00000198718"/>
<dbReference type="Orphanet" id="475">
    <property type="disease" value="Joubert syndrome"/>
</dbReference>
<dbReference type="PharmGKB" id="PA162387516"/>
<dbReference type="VEuPathDB" id="HostDB:ENSG00000198718"/>
<dbReference type="eggNOG" id="KOG2933">
    <property type="taxonomic scope" value="Eukaryota"/>
</dbReference>
<dbReference type="GeneTree" id="ENSGT00940000158712"/>
<dbReference type="HOGENOM" id="CLU_275329_0_0_1"/>
<dbReference type="InParanoid" id="Q9Y4F4"/>
<dbReference type="OrthoDB" id="63891at2759"/>
<dbReference type="PAN-GO" id="Q9Y4F4">
    <property type="GO annotations" value="7 GO annotations based on evolutionary models"/>
</dbReference>
<dbReference type="PhylomeDB" id="Q9Y4F4"/>
<dbReference type="TreeFam" id="TF315518"/>
<dbReference type="PathwayCommons" id="Q9Y4F4"/>
<dbReference type="SignaLink" id="Q9Y4F4"/>
<dbReference type="BioGRID-ORCS" id="23116">
    <property type="hits" value="12 hits in 1150 CRISPR screens"/>
</dbReference>
<dbReference type="ChiTaRS" id="FAM179B">
    <property type="organism name" value="human"/>
</dbReference>
<dbReference type="GenomeRNAi" id="23116"/>
<dbReference type="Pharos" id="Q9Y4F4">
    <property type="development level" value="Tdark"/>
</dbReference>
<dbReference type="PRO" id="PR:Q9Y4F4"/>
<dbReference type="Proteomes" id="UP000005640">
    <property type="component" value="Chromosome 14"/>
</dbReference>
<dbReference type="RNAct" id="Q9Y4F4">
    <property type="molecule type" value="protein"/>
</dbReference>
<dbReference type="Bgee" id="ENSG00000198718">
    <property type="expression patterns" value="Expressed in bronchial epithelial cell and 207 other cell types or tissues"/>
</dbReference>
<dbReference type="ExpressionAtlas" id="Q9Y4F4">
    <property type="expression patterns" value="baseline and differential"/>
</dbReference>
<dbReference type="GO" id="GO:0005930">
    <property type="term" value="C:axoneme"/>
    <property type="evidence" value="ECO:0000314"/>
    <property type="project" value="UniProtKB"/>
</dbReference>
<dbReference type="GO" id="GO:0036064">
    <property type="term" value="C:ciliary basal body"/>
    <property type="evidence" value="ECO:0000250"/>
    <property type="project" value="UniProtKB"/>
</dbReference>
<dbReference type="GO" id="GO:0005929">
    <property type="term" value="C:cilium"/>
    <property type="evidence" value="ECO:0000250"/>
    <property type="project" value="UniProtKB"/>
</dbReference>
<dbReference type="GO" id="GO:0005881">
    <property type="term" value="C:cytoplasmic microtubule"/>
    <property type="evidence" value="ECO:0000318"/>
    <property type="project" value="GO_Central"/>
</dbReference>
<dbReference type="GO" id="GO:0008017">
    <property type="term" value="F:microtubule binding"/>
    <property type="evidence" value="ECO:0000318"/>
    <property type="project" value="GO_Central"/>
</dbReference>
<dbReference type="GO" id="GO:0035082">
    <property type="term" value="P:axoneme assembly"/>
    <property type="evidence" value="ECO:0000250"/>
    <property type="project" value="UniProtKB"/>
</dbReference>
<dbReference type="GO" id="GO:0060271">
    <property type="term" value="P:cilium assembly"/>
    <property type="evidence" value="ECO:0000315"/>
    <property type="project" value="UniProtKB"/>
</dbReference>
<dbReference type="GO" id="GO:0000226">
    <property type="term" value="P:microtubule cytoskeleton organization"/>
    <property type="evidence" value="ECO:0000318"/>
    <property type="project" value="GO_Central"/>
</dbReference>
<dbReference type="GO" id="GO:1905515">
    <property type="term" value="P:non-motile cilium assembly"/>
    <property type="evidence" value="ECO:0000250"/>
    <property type="project" value="UniProtKB"/>
</dbReference>
<dbReference type="GO" id="GO:0031116">
    <property type="term" value="P:positive regulation of microtubule polymerization"/>
    <property type="evidence" value="ECO:0000250"/>
    <property type="project" value="UniProtKB"/>
</dbReference>
<dbReference type="FunFam" id="1.25.10.10:FF:000117">
    <property type="entry name" value="TOG array regulator of axonemal microtubules 1"/>
    <property type="match status" value="1"/>
</dbReference>
<dbReference type="FunFam" id="1.25.10.10:FF:000126">
    <property type="entry name" value="TOG array regulator of axonemal microtubules 1"/>
    <property type="match status" value="1"/>
</dbReference>
<dbReference type="FunFam" id="1.25.10.10:FF:000142">
    <property type="entry name" value="TOG array regulator of axonemal microtubules 1"/>
    <property type="match status" value="1"/>
</dbReference>
<dbReference type="FunFam" id="1.25.10.10:FF:000482">
    <property type="entry name" value="TOG array regulator of axonemal microtubules 1"/>
    <property type="match status" value="1"/>
</dbReference>
<dbReference type="Gene3D" id="1.25.10.10">
    <property type="entry name" value="Leucine-rich Repeat Variant"/>
    <property type="match status" value="4"/>
</dbReference>
<dbReference type="InterPro" id="IPR011989">
    <property type="entry name" value="ARM-like"/>
</dbReference>
<dbReference type="InterPro" id="IPR016024">
    <property type="entry name" value="ARM-type_fold"/>
</dbReference>
<dbReference type="InterPro" id="IPR034085">
    <property type="entry name" value="TOG"/>
</dbReference>
<dbReference type="PANTHER" id="PTHR21567">
    <property type="entry name" value="CLASP"/>
    <property type="match status" value="1"/>
</dbReference>
<dbReference type="PANTHER" id="PTHR21567:SF6">
    <property type="entry name" value="TOG ARRAY REGULATOR OF AXONEMAL MICROTUBULES PROTEIN 1"/>
    <property type="match status" value="1"/>
</dbReference>
<dbReference type="Pfam" id="PF21040">
    <property type="entry name" value="CEP104-like_TOG"/>
    <property type="match status" value="1"/>
</dbReference>
<dbReference type="SMART" id="SM01349">
    <property type="entry name" value="TOG"/>
    <property type="match status" value="2"/>
</dbReference>
<dbReference type="SUPFAM" id="SSF48371">
    <property type="entry name" value="ARM repeat"/>
    <property type="match status" value="2"/>
</dbReference>
<proteinExistence type="evidence at protein level"/>
<comment type="function">
    <text evidence="1 2 5">Involved in ciliogenesis (PubMed:32453716). It is required for appropriate acetylation and polyglutamylation of ciliary microtubules, and regulation of cilium length (PubMed:32453716). Interacts with microtubules and promotes microtubule polymerization via its HEAT repeat domains, especially those in TOG region 2 and 4 (By similarity).</text>
</comment>
<comment type="subunit">
    <text evidence="5">Interacts with ARMC9, CCDC66, CEP104 and CSPP1.</text>
</comment>
<comment type="subcellular location">
    <subcellularLocation>
        <location evidence="2">Cell projection</location>
        <location evidence="2">Cilium</location>
    </subcellularLocation>
    <subcellularLocation>
        <location evidence="2">Cytoplasm</location>
        <location evidence="2">Cytoskeleton</location>
    </subcellularLocation>
    <subcellularLocation>
        <location evidence="5">Cytoplasm</location>
        <location evidence="5">Cytoskeleton</location>
        <location evidence="5">Cilium axoneme</location>
    </subcellularLocation>
    <text evidence="2">Detected along the length of primary cilia and at the basal body. Colocalization with the cytoplasmic microtubule cytoskeleton upon heterologous expression is most likely an artifact.</text>
</comment>
<comment type="alternative products">
    <event type="alternative splicing"/>
    <isoform>
        <id>Q9Y4F4-1</id>
        <name>1</name>
        <sequence type="displayed"/>
    </isoform>
    <isoform>
        <id>Q9Y4F4-2</id>
        <name>2</name>
        <sequence type="described" ref="VSP_020822 VSP_020823"/>
    </isoform>
    <isoform>
        <id>Q9Y4F4-3</id>
        <name>3</name>
        <sequence type="described" ref="VSP_020821 VSP_020824"/>
    </isoform>
</comment>
<comment type="domain">
    <text evidence="2">The TOG regions are composed of HEAT-type repeats that assemble into a solenoid structure. They mediate interaction with microtubules.</text>
</comment>
<comment type="disease" evidence="5 6">
    <disease id="DI-06049">
        <name>Joubert syndrome 37</name>
        <acronym>JBTS37</acronym>
        <description>A form of Joubert syndrome, a disorder presenting with cerebellar ataxia, oculomotor apraxia, hypotonia, neonatal breathing abnormalities and psychomotor delay. Neuroradiologically, it is characterized by cerebellar vermian hypoplasia/aplasia, thickened and reoriented superior cerebellar peduncles, and an abnormally large interpeduncular fossa, giving the appearance of a molar tooth on transaxial slices (molar tooth sign). Additional variable features include retinal dystrophy, renal disease, liver fibrosis, and polydactyly. JBTS37 inheritance is autosomal recessive.</description>
        <dbReference type="MIM" id="619185"/>
    </disease>
    <text>The disease is caused by variants affecting the gene represented in this entry.</text>
</comment>
<comment type="similarity">
    <text evidence="9">Belongs to the Crescerin family.</text>
</comment>
<comment type="sequence caution" evidence="9">
    <conflict type="erroneous initiation">
        <sequence resource="EMBL-CDS" id="BAA24853"/>
    </conflict>
    <text>Extended N-terminus.</text>
</comment>
<comment type="sequence caution" evidence="9">
    <conflict type="frameshift">
        <sequence resource="EMBL-CDS" id="CAH18354"/>
    </conflict>
</comment>